<evidence type="ECO:0000255" key="1">
    <source>
        <dbReference type="HAMAP-Rule" id="MF_00632"/>
    </source>
</evidence>
<proteinExistence type="inferred from homology"/>
<accession>Q2JVU4</accession>
<reference key="1">
    <citation type="journal article" date="2007" name="ISME J.">
        <title>Population level functional diversity in a microbial community revealed by comparative genomic and metagenomic analyses.</title>
        <authorList>
            <person name="Bhaya D."/>
            <person name="Grossman A.R."/>
            <person name="Steunou A.-S."/>
            <person name="Khuri N."/>
            <person name="Cohan F.M."/>
            <person name="Hamamura N."/>
            <person name="Melendrez M.C."/>
            <person name="Bateson M.M."/>
            <person name="Ward D.M."/>
            <person name="Heidelberg J.F."/>
        </authorList>
    </citation>
    <scope>NUCLEOTIDE SEQUENCE [LARGE SCALE GENOMIC DNA]</scope>
    <source>
        <strain>JA-3-3Ab</strain>
    </source>
</reference>
<gene>
    <name type="ordered locus">CYA_0935</name>
</gene>
<name>Y935_SYNJA</name>
<protein>
    <recommendedName>
        <fullName evidence="1">Nucleotide-binding protein CYA_0935</fullName>
    </recommendedName>
</protein>
<dbReference type="EMBL" id="CP000239">
    <property type="protein sequence ID" value="ABC99137.1"/>
    <property type="molecule type" value="Genomic_DNA"/>
</dbReference>
<dbReference type="RefSeq" id="WP_011429820.1">
    <property type="nucleotide sequence ID" value="NC_007775.1"/>
</dbReference>
<dbReference type="SMR" id="Q2JVU4"/>
<dbReference type="STRING" id="321327.CYA_0935"/>
<dbReference type="KEGG" id="cya:CYA_0935"/>
<dbReference type="eggNOG" id="COG1666">
    <property type="taxonomic scope" value="Bacteria"/>
</dbReference>
<dbReference type="HOGENOM" id="CLU_099839_0_0_3"/>
<dbReference type="OrthoDB" id="9801447at2"/>
<dbReference type="Proteomes" id="UP000008818">
    <property type="component" value="Chromosome"/>
</dbReference>
<dbReference type="GO" id="GO:0005829">
    <property type="term" value="C:cytosol"/>
    <property type="evidence" value="ECO:0007669"/>
    <property type="project" value="TreeGrafter"/>
</dbReference>
<dbReference type="GO" id="GO:0000166">
    <property type="term" value="F:nucleotide binding"/>
    <property type="evidence" value="ECO:0007669"/>
    <property type="project" value="TreeGrafter"/>
</dbReference>
<dbReference type="CDD" id="cd11740">
    <property type="entry name" value="YajQ_like"/>
    <property type="match status" value="1"/>
</dbReference>
<dbReference type="Gene3D" id="3.30.70.860">
    <property type="match status" value="1"/>
</dbReference>
<dbReference type="Gene3D" id="3.30.70.990">
    <property type="entry name" value="YajQ-like, domain 2"/>
    <property type="match status" value="1"/>
</dbReference>
<dbReference type="HAMAP" id="MF_00632">
    <property type="entry name" value="YajQ"/>
    <property type="match status" value="1"/>
</dbReference>
<dbReference type="InterPro" id="IPR007551">
    <property type="entry name" value="DUF520"/>
</dbReference>
<dbReference type="InterPro" id="IPR035571">
    <property type="entry name" value="UPF0234-like_C"/>
</dbReference>
<dbReference type="InterPro" id="IPR035570">
    <property type="entry name" value="UPF0234_N"/>
</dbReference>
<dbReference type="InterPro" id="IPR036183">
    <property type="entry name" value="YajQ-like_sf"/>
</dbReference>
<dbReference type="NCBIfam" id="NF003819">
    <property type="entry name" value="PRK05412.1"/>
    <property type="match status" value="1"/>
</dbReference>
<dbReference type="PANTHER" id="PTHR30476">
    <property type="entry name" value="UPF0234 PROTEIN YAJQ"/>
    <property type="match status" value="1"/>
</dbReference>
<dbReference type="PANTHER" id="PTHR30476:SF0">
    <property type="entry name" value="UPF0234 PROTEIN YAJQ"/>
    <property type="match status" value="1"/>
</dbReference>
<dbReference type="Pfam" id="PF04461">
    <property type="entry name" value="DUF520"/>
    <property type="match status" value="1"/>
</dbReference>
<dbReference type="SUPFAM" id="SSF89963">
    <property type="entry name" value="YajQ-like"/>
    <property type="match status" value="2"/>
</dbReference>
<keyword id="KW-0547">Nucleotide-binding</keyword>
<organism>
    <name type="scientific">Synechococcus sp. (strain JA-3-3Ab)</name>
    <name type="common">Cyanobacteria bacterium Yellowstone A-Prime</name>
    <dbReference type="NCBI Taxonomy" id="321327"/>
    <lineage>
        <taxon>Bacteria</taxon>
        <taxon>Bacillati</taxon>
        <taxon>Cyanobacteriota</taxon>
        <taxon>Cyanophyceae</taxon>
        <taxon>Synechococcales</taxon>
        <taxon>Synechococcaceae</taxon>
        <taxon>Synechococcus</taxon>
    </lineage>
</organism>
<comment type="function">
    <text evidence="1">Nucleotide-binding protein.</text>
</comment>
<comment type="similarity">
    <text evidence="1">Belongs to the YajQ family.</text>
</comment>
<feature type="chain" id="PRO_0000261981" description="Nucleotide-binding protein CYA_0935">
    <location>
        <begin position="1"/>
        <end position="163"/>
    </location>
</feature>
<sequence>MASTYSFDIVSDFDRQELVNAVDQARREIKQRYDLKDTQTEIELEEGSLIITTASEMALNSIRDLLLTKAAKRGLSLKIFDFQPPESAGGNRVRQVVRLKKGIDAALAKQIAKQIRDNFKKVQPSIQGDLVRVSGKDKDELQAVIQMLKQQDYPVALQFVNYR</sequence>